<feature type="signal peptide" evidence="2">
    <location>
        <begin position="1"/>
        <end position="21"/>
    </location>
</feature>
<feature type="propeptide" id="PRO_0000400931" evidence="1">
    <location>
        <begin position="22"/>
        <end position="74"/>
    </location>
</feature>
<feature type="peptide" id="PRO_0000400932" description="U11-theraphotoxin-Hhn1h">
    <location>
        <begin position="75"/>
        <end position="113"/>
    </location>
</feature>
<feature type="region of interest" description="Disordered" evidence="3">
    <location>
        <begin position="61"/>
        <end position="83"/>
    </location>
</feature>
<feature type="disulfide bond" evidence="1">
    <location>
        <begin position="82"/>
        <end position="95"/>
    </location>
</feature>
<feature type="disulfide bond" evidence="1">
    <location>
        <begin position="89"/>
        <end position="110"/>
    </location>
</feature>
<reference key="1">
    <citation type="journal article" date="2010" name="J. Proteome Res.">
        <title>Molecular diversification of peptide toxins from the tarantula Haplopelma hainanum (Ornithoctonus hainana) venom based on transcriptomic, peptidomic, and genomic analyses.</title>
        <authorList>
            <person name="Tang X."/>
            <person name="Zhang Y."/>
            <person name="Hu W."/>
            <person name="Xu D."/>
            <person name="Tao H."/>
            <person name="Yang X."/>
            <person name="Li Y."/>
            <person name="Jiang L."/>
            <person name="Liang S."/>
        </authorList>
    </citation>
    <scope>NUCLEOTIDE SEQUENCE [LARGE SCALE MRNA]</scope>
    <source>
        <tissue>Venom gland</tissue>
    </source>
</reference>
<accession>D2Y278</accession>
<organism>
    <name type="scientific">Cyriopagopus hainanus</name>
    <name type="common">Chinese bird spider</name>
    <name type="synonym">Haplopelma hainanum</name>
    <dbReference type="NCBI Taxonomy" id="209901"/>
    <lineage>
        <taxon>Eukaryota</taxon>
        <taxon>Metazoa</taxon>
        <taxon>Ecdysozoa</taxon>
        <taxon>Arthropoda</taxon>
        <taxon>Chelicerata</taxon>
        <taxon>Arachnida</taxon>
        <taxon>Araneae</taxon>
        <taxon>Mygalomorphae</taxon>
        <taxon>Theraphosidae</taxon>
        <taxon>Haplopelma</taxon>
    </lineage>
</organism>
<name>H16H1_CYRHA</name>
<comment type="function">
    <text evidence="1">Probable ion channel inhibitor.</text>
</comment>
<comment type="subcellular location">
    <subcellularLocation>
        <location evidence="1">Secreted</location>
    </subcellularLocation>
</comment>
<comment type="tissue specificity">
    <text>Expressed by the venom gland.</text>
</comment>
<comment type="domain">
    <text evidence="1">The presence of a 'disulfide through disulfide knot' structurally defines this protein as a knottin.</text>
</comment>
<comment type="similarity">
    <text evidence="4">Belongs to the neurotoxin 14 (magi-1) family. 01 (HNTX-16) subfamily.</text>
</comment>
<comment type="caution">
    <text evidence="4">While it is structurally defined as a knottin it lacks the conserved Cys residue in position 75.</text>
</comment>
<protein>
    <recommendedName>
        <fullName>U11-theraphotoxin-Hhn1h</fullName>
        <shortName>U11-TRTX-Hhn1h</shortName>
    </recommendedName>
    <alternativeName>
        <fullName>Hainantoxin-XVI-8</fullName>
        <shortName>HNTX-XVI-8</shortName>
    </alternativeName>
</protein>
<dbReference type="EMBL" id="GU292955">
    <property type="protein sequence ID" value="ADB56771.1"/>
    <property type="molecule type" value="mRNA"/>
</dbReference>
<dbReference type="ArachnoServer" id="AS001590">
    <property type="toxin name" value="U11-theraphotoxin-Hhn1h"/>
</dbReference>
<dbReference type="GO" id="GO:0005576">
    <property type="term" value="C:extracellular region"/>
    <property type="evidence" value="ECO:0007669"/>
    <property type="project" value="UniProtKB-SubCell"/>
</dbReference>
<dbReference type="GO" id="GO:0019871">
    <property type="term" value="F:sodium channel inhibitor activity"/>
    <property type="evidence" value="ECO:0007669"/>
    <property type="project" value="InterPro"/>
</dbReference>
<dbReference type="GO" id="GO:0090729">
    <property type="term" value="F:toxin activity"/>
    <property type="evidence" value="ECO:0007669"/>
    <property type="project" value="UniProtKB-KW"/>
</dbReference>
<dbReference type="InterPro" id="IPR012627">
    <property type="entry name" value="Toxin_22"/>
</dbReference>
<dbReference type="Pfam" id="PF08092">
    <property type="entry name" value="Toxin_22"/>
    <property type="match status" value="1"/>
</dbReference>
<keyword id="KW-1015">Disulfide bond</keyword>
<keyword id="KW-0872">Ion channel impairing toxin</keyword>
<keyword id="KW-0960">Knottin</keyword>
<keyword id="KW-0964">Secreted</keyword>
<keyword id="KW-0732">Signal</keyword>
<keyword id="KW-0800">Toxin</keyword>
<evidence type="ECO:0000250" key="1"/>
<evidence type="ECO:0000255" key="2"/>
<evidence type="ECO:0000256" key="3">
    <source>
        <dbReference type="SAM" id="MobiDB-lite"/>
    </source>
</evidence>
<evidence type="ECO:0000305" key="4"/>
<proteinExistence type="evidence at transcript level"/>
<sequence>MNTVRVTFLLVFVLVVSLGQADKDENRMEMQEKTEQGKSYLDFAENLLLQKLEELEAKLLEEDSEESRNSRQKRRIGEGVPCDENDPRCCPRLVCLKPTLHGIWYKSYYCYKK</sequence>